<protein>
    <recommendedName>
        <fullName evidence="5">Berberine bridge enzyme-like 14</fullName>
        <shortName evidence="5">AtBBE-like 14</shortName>
        <ecNumber evidence="1">1.1.1.-</ecNumber>
    </recommendedName>
</protein>
<accession>F4HV09</accession>
<accession>Q9LNL9</accession>
<feature type="signal peptide" evidence="2">
    <location>
        <begin position="1"/>
        <end position="23"/>
    </location>
</feature>
<feature type="chain" id="PRO_5003315080" description="Berberine bridge enzyme-like 14">
    <location>
        <begin position="24"/>
        <end position="527"/>
    </location>
</feature>
<feature type="domain" description="FAD-binding PCMH-type" evidence="4">
    <location>
        <begin position="74"/>
        <end position="249"/>
    </location>
</feature>
<feature type="glycosylation site" description="N-linked (GlcNAc...) asparagine" evidence="3">
    <location>
        <position position="47"/>
    </location>
</feature>
<feature type="glycosylation site" description="N-linked (GlcNAc...) asparagine" evidence="3">
    <location>
        <position position="72"/>
    </location>
</feature>
<feature type="glycosylation site" description="N-linked (GlcNAc...) asparagine" evidence="3">
    <location>
        <position position="161"/>
    </location>
</feature>
<feature type="glycosylation site" description="N-linked (GlcNAc...) asparagine" evidence="3">
    <location>
        <position position="296"/>
    </location>
</feature>
<feature type="glycosylation site" description="N-linked (GlcNAc...) asparagine" evidence="3">
    <location>
        <position position="328"/>
    </location>
</feature>
<feature type="glycosylation site" description="N-linked (GlcNAc...) asparagine" evidence="3">
    <location>
        <position position="396"/>
    </location>
</feature>
<feature type="glycosylation site" description="N-linked (GlcNAc...) asparagine" evidence="3">
    <location>
        <position position="481"/>
    </location>
</feature>
<feature type="disulfide bond" evidence="1">
    <location>
        <begin position="35"/>
        <end position="96"/>
    </location>
</feature>
<feature type="cross-link" description="6-(S-cysteinyl)-8alpha-(pros-histidyl)-FAD (His-Cys)" evidence="1">
    <location>
        <begin position="111"/>
        <end position="174"/>
    </location>
</feature>
<evidence type="ECO:0000250" key="1">
    <source>
        <dbReference type="UniProtKB" id="O64743"/>
    </source>
</evidence>
<evidence type="ECO:0000255" key="2"/>
<evidence type="ECO:0000255" key="3">
    <source>
        <dbReference type="PROSITE-ProRule" id="PRU00498"/>
    </source>
</evidence>
<evidence type="ECO:0000255" key="4">
    <source>
        <dbReference type="PROSITE-ProRule" id="PRU00718"/>
    </source>
</evidence>
<evidence type="ECO:0000303" key="5">
    <source>
    </source>
</evidence>
<evidence type="ECO:0000305" key="6"/>
<evidence type="ECO:0000312" key="7">
    <source>
        <dbReference type="Araport" id="AT1G34575"/>
    </source>
</evidence>
<evidence type="ECO:0000312" key="8">
    <source>
        <dbReference type="EMBL" id="AAF79255.1"/>
    </source>
</evidence>
<sequence>MKSSTTQTLIFTVFLLLIPTSFAAPPKLKDSFTQCVTVFKPSVPIQNFTYTQQNPNFLTILNNYVRNLRYFNGTTRKPVAIVAAAHFTHIQATINCAKKLGLQLRIRSGGHDYDGMSYLSTVDFVVLDMFNLRAIEIDPKLDTAWVQSGATLGEIYYNVANKSNNLRGFPAGICPGLGAGGHFSGGGYGNMMRKYGLSIDNIIDAKIVDANARVLDRSSMGEDLFWALRGGGAASFCVVLAWKIKLVPVPEKVTVFNVETIGNRGVIPTDLAAKWQEIADKIDNDLFIRLTLSSSNKTVKASFMGMYLGNSEKLLEIMNAKFPELGLNKTECIEMKWIESVLFWLSIPPGTAPTSVMLNRIPQKQIYLKRKSDYVQKPISKPGLESIFKILSENENVSMAWNPYGGRMSEIPATETAFPHRAGNMFKIQYSSNWFVPGEEAASDCLSQTERVFEAMSPYVSKNPREAFLNYRDIDIGKNLNSTYEEGKVYGVKYFKNNFERLVQVKTRVDPDNIFRYEQSIPVHVSR</sequence>
<comment type="cofactor">
    <cofactor evidence="1">
        <name>FAD</name>
        <dbReference type="ChEBI" id="CHEBI:57692"/>
    </cofactor>
    <text evidence="1">Binds 1 FAD per subunit in a bicovalent manner.</text>
</comment>
<comment type="subcellular location">
    <subcellularLocation>
        <location evidence="1">Secreted</location>
        <location evidence="1">Cell wall</location>
    </subcellularLocation>
</comment>
<comment type="PTM">
    <text evidence="1">The FAD cofactor is bound via a bicovalent 6-S-cysteinyl, 8alpha-N1-histidyl FAD linkage.</text>
</comment>
<comment type="similarity">
    <text evidence="6">Belongs to the oxygen-dependent FAD-linked oxidoreductase family.</text>
</comment>
<comment type="sequence caution" evidence="6">
    <conflict type="erroneous gene model prediction">
        <sequence resource="EMBL-CDS" id="AAF79255"/>
    </conflict>
</comment>
<reference key="1">
    <citation type="journal article" date="2000" name="Nature">
        <title>Sequence and analysis of chromosome 1 of the plant Arabidopsis thaliana.</title>
        <authorList>
            <person name="Theologis A."/>
            <person name="Ecker J.R."/>
            <person name="Palm C.J."/>
            <person name="Federspiel N.A."/>
            <person name="Kaul S."/>
            <person name="White O."/>
            <person name="Alonso J."/>
            <person name="Altafi H."/>
            <person name="Araujo R."/>
            <person name="Bowman C.L."/>
            <person name="Brooks S.Y."/>
            <person name="Buehler E."/>
            <person name="Chan A."/>
            <person name="Chao Q."/>
            <person name="Chen H."/>
            <person name="Cheuk R.F."/>
            <person name="Chin C.W."/>
            <person name="Chung M.K."/>
            <person name="Conn L."/>
            <person name="Conway A.B."/>
            <person name="Conway A.R."/>
            <person name="Creasy T.H."/>
            <person name="Dewar K."/>
            <person name="Dunn P."/>
            <person name="Etgu P."/>
            <person name="Feldblyum T.V."/>
            <person name="Feng J.-D."/>
            <person name="Fong B."/>
            <person name="Fujii C.Y."/>
            <person name="Gill J.E."/>
            <person name="Goldsmith A.D."/>
            <person name="Haas B."/>
            <person name="Hansen N.F."/>
            <person name="Hughes B."/>
            <person name="Huizar L."/>
            <person name="Hunter J.L."/>
            <person name="Jenkins J."/>
            <person name="Johnson-Hopson C."/>
            <person name="Khan S."/>
            <person name="Khaykin E."/>
            <person name="Kim C.J."/>
            <person name="Koo H.L."/>
            <person name="Kremenetskaia I."/>
            <person name="Kurtz D.B."/>
            <person name="Kwan A."/>
            <person name="Lam B."/>
            <person name="Langin-Hooper S."/>
            <person name="Lee A."/>
            <person name="Lee J.M."/>
            <person name="Lenz C.A."/>
            <person name="Li J.H."/>
            <person name="Li Y.-P."/>
            <person name="Lin X."/>
            <person name="Liu S.X."/>
            <person name="Liu Z.A."/>
            <person name="Luros J.S."/>
            <person name="Maiti R."/>
            <person name="Marziali A."/>
            <person name="Militscher J."/>
            <person name="Miranda M."/>
            <person name="Nguyen M."/>
            <person name="Nierman W.C."/>
            <person name="Osborne B.I."/>
            <person name="Pai G."/>
            <person name="Peterson J."/>
            <person name="Pham P.K."/>
            <person name="Rizzo M."/>
            <person name="Rooney T."/>
            <person name="Rowley D."/>
            <person name="Sakano H."/>
            <person name="Salzberg S.L."/>
            <person name="Schwartz J.R."/>
            <person name="Shinn P."/>
            <person name="Southwick A.M."/>
            <person name="Sun H."/>
            <person name="Tallon L.J."/>
            <person name="Tambunga G."/>
            <person name="Toriumi M.J."/>
            <person name="Town C.D."/>
            <person name="Utterback T."/>
            <person name="Van Aken S."/>
            <person name="Vaysberg M."/>
            <person name="Vysotskaia V.S."/>
            <person name="Walker M."/>
            <person name="Wu D."/>
            <person name="Yu G."/>
            <person name="Fraser C.M."/>
            <person name="Venter J.C."/>
            <person name="Davis R.W."/>
        </authorList>
    </citation>
    <scope>NUCLEOTIDE SEQUENCE [LARGE SCALE GENOMIC DNA]</scope>
    <source>
        <strain>cv. Columbia</strain>
    </source>
</reference>
<reference key="2">
    <citation type="journal article" date="2017" name="Plant J.">
        <title>Araport11: a complete reannotation of the Arabidopsis thaliana reference genome.</title>
        <authorList>
            <person name="Cheng C.Y."/>
            <person name="Krishnakumar V."/>
            <person name="Chan A.P."/>
            <person name="Thibaud-Nissen F."/>
            <person name="Schobel S."/>
            <person name="Town C.D."/>
        </authorList>
    </citation>
    <scope>GENOME REANNOTATION</scope>
    <source>
        <strain>cv. Columbia</strain>
    </source>
</reference>
<reference key="3">
    <citation type="journal article" date="2015" name="J. Biol. Chem.">
        <title>Oxidation of monolignols by members of the berberine bridge enzyme family suggests a role in plant cell wall metabolism.</title>
        <authorList>
            <person name="Daniel B."/>
            <person name="Pavkov-Keller T."/>
            <person name="Steiner B."/>
            <person name="Dordic A."/>
            <person name="Gutmann A."/>
            <person name="Nidetzky B."/>
            <person name="Sensen C.W."/>
            <person name="van der Graaff E."/>
            <person name="Wallner S."/>
            <person name="Gruber K."/>
            <person name="Macheroux P."/>
        </authorList>
    </citation>
    <scope>GENE FAMILY</scope>
    <scope>NOMENCLATURE</scope>
</reference>
<keyword id="KW-0134">Cell wall</keyword>
<keyword id="KW-1015">Disulfide bond</keyword>
<keyword id="KW-0274">FAD</keyword>
<keyword id="KW-0285">Flavoprotein</keyword>
<keyword id="KW-0325">Glycoprotein</keyword>
<keyword id="KW-0547">Nucleotide-binding</keyword>
<keyword id="KW-0560">Oxidoreductase</keyword>
<keyword id="KW-1185">Reference proteome</keyword>
<keyword id="KW-0964">Secreted</keyword>
<keyword id="KW-0732">Signal</keyword>
<name>BBE14_ARATH</name>
<dbReference type="EC" id="1.1.1.-" evidence="1"/>
<dbReference type="EMBL" id="AC023279">
    <property type="protein sequence ID" value="AAF79255.1"/>
    <property type="status" value="ALT_SEQ"/>
    <property type="molecule type" value="Genomic_DNA"/>
</dbReference>
<dbReference type="EMBL" id="CP002684">
    <property type="protein sequence ID" value="AEE31727.1"/>
    <property type="molecule type" value="Genomic_DNA"/>
</dbReference>
<dbReference type="RefSeq" id="NP_564449.1">
    <property type="nucleotide sequence ID" value="NM_103181.2"/>
</dbReference>
<dbReference type="SMR" id="F4HV09"/>
<dbReference type="STRING" id="3702.F4HV09"/>
<dbReference type="GlyGen" id="F4HV09">
    <property type="glycosylation" value="7 sites"/>
</dbReference>
<dbReference type="PaxDb" id="3702-AT1G34575.1"/>
<dbReference type="ProteomicsDB" id="240846"/>
<dbReference type="EnsemblPlants" id="AT1G34575.1">
    <property type="protein sequence ID" value="AT1G34575.1"/>
    <property type="gene ID" value="AT1G34575"/>
</dbReference>
<dbReference type="GeneID" id="840361"/>
<dbReference type="Gramene" id="AT1G34575.1">
    <property type="protein sequence ID" value="AT1G34575.1"/>
    <property type="gene ID" value="AT1G34575"/>
</dbReference>
<dbReference type="KEGG" id="ath:AT1G34575"/>
<dbReference type="Araport" id="AT1G34575"/>
<dbReference type="TAIR" id="AT1G34575">
    <property type="gene designation" value="ATBBE14"/>
</dbReference>
<dbReference type="eggNOG" id="ENOG502QVGN">
    <property type="taxonomic scope" value="Eukaryota"/>
</dbReference>
<dbReference type="HOGENOM" id="CLU_018354_6_0_1"/>
<dbReference type="InParanoid" id="F4HV09"/>
<dbReference type="OMA" id="NIFRYEQ"/>
<dbReference type="PRO" id="PR:F4HV09"/>
<dbReference type="Proteomes" id="UP000006548">
    <property type="component" value="Chromosome 1"/>
</dbReference>
<dbReference type="ExpressionAtlas" id="F4HV09">
    <property type="expression patterns" value="baseline and differential"/>
</dbReference>
<dbReference type="GO" id="GO:0005576">
    <property type="term" value="C:extracellular region"/>
    <property type="evidence" value="ECO:0007669"/>
    <property type="project" value="UniProtKB-KW"/>
</dbReference>
<dbReference type="GO" id="GO:0009505">
    <property type="term" value="C:plant-type cell wall"/>
    <property type="evidence" value="ECO:0000250"/>
    <property type="project" value="UniProtKB"/>
</dbReference>
<dbReference type="GO" id="GO:0071949">
    <property type="term" value="F:FAD binding"/>
    <property type="evidence" value="ECO:0007669"/>
    <property type="project" value="InterPro"/>
</dbReference>
<dbReference type="GO" id="GO:0016491">
    <property type="term" value="F:oxidoreductase activity"/>
    <property type="evidence" value="ECO:0007669"/>
    <property type="project" value="UniProtKB-KW"/>
</dbReference>
<dbReference type="FunFam" id="3.30.43.10:FF:000004">
    <property type="entry name" value="Berberine bridge enzyme-like 15"/>
    <property type="match status" value="1"/>
</dbReference>
<dbReference type="Gene3D" id="3.30.465.10">
    <property type="match status" value="1"/>
</dbReference>
<dbReference type="Gene3D" id="3.40.462.20">
    <property type="match status" value="1"/>
</dbReference>
<dbReference type="Gene3D" id="3.30.43.10">
    <property type="entry name" value="Uridine Diphospho-n-acetylenolpyruvylglucosamine Reductase, domain 2"/>
    <property type="match status" value="1"/>
</dbReference>
<dbReference type="InterPro" id="IPR012951">
    <property type="entry name" value="BBE"/>
</dbReference>
<dbReference type="InterPro" id="IPR016166">
    <property type="entry name" value="FAD-bd_PCMH"/>
</dbReference>
<dbReference type="InterPro" id="IPR036318">
    <property type="entry name" value="FAD-bd_PCMH-like_sf"/>
</dbReference>
<dbReference type="InterPro" id="IPR016167">
    <property type="entry name" value="FAD-bd_PCMH_sub1"/>
</dbReference>
<dbReference type="InterPro" id="IPR016169">
    <property type="entry name" value="FAD-bd_PCMH_sub2"/>
</dbReference>
<dbReference type="InterPro" id="IPR006094">
    <property type="entry name" value="Oxid_FAD_bind_N"/>
</dbReference>
<dbReference type="PANTHER" id="PTHR32448">
    <property type="entry name" value="OS08G0158400 PROTEIN"/>
    <property type="match status" value="1"/>
</dbReference>
<dbReference type="Pfam" id="PF08031">
    <property type="entry name" value="BBE"/>
    <property type="match status" value="1"/>
</dbReference>
<dbReference type="Pfam" id="PF01565">
    <property type="entry name" value="FAD_binding_4"/>
    <property type="match status" value="1"/>
</dbReference>
<dbReference type="SUPFAM" id="SSF56176">
    <property type="entry name" value="FAD-binding/transporter-associated domain-like"/>
    <property type="match status" value="1"/>
</dbReference>
<dbReference type="PROSITE" id="PS51387">
    <property type="entry name" value="FAD_PCMH"/>
    <property type="match status" value="1"/>
</dbReference>
<proteinExistence type="inferred from homology"/>
<organism>
    <name type="scientific">Arabidopsis thaliana</name>
    <name type="common">Mouse-ear cress</name>
    <dbReference type="NCBI Taxonomy" id="3702"/>
    <lineage>
        <taxon>Eukaryota</taxon>
        <taxon>Viridiplantae</taxon>
        <taxon>Streptophyta</taxon>
        <taxon>Embryophyta</taxon>
        <taxon>Tracheophyta</taxon>
        <taxon>Spermatophyta</taxon>
        <taxon>Magnoliopsida</taxon>
        <taxon>eudicotyledons</taxon>
        <taxon>Gunneridae</taxon>
        <taxon>Pentapetalae</taxon>
        <taxon>rosids</taxon>
        <taxon>malvids</taxon>
        <taxon>Brassicales</taxon>
        <taxon>Brassicaceae</taxon>
        <taxon>Camelineae</taxon>
        <taxon>Arabidopsis</taxon>
    </lineage>
</organism>
<gene>
    <name evidence="7" type="ordered locus">At1g34575</name>
    <name evidence="8" type="ORF">F12K21.9</name>
</gene>